<organism>
    <name type="scientific">Methanosarcina mazei (strain ATCC BAA-159 / DSM 3647 / Goe1 / Go1 / JCM 11833 / OCM 88)</name>
    <name type="common">Methanosarcina frisia</name>
    <dbReference type="NCBI Taxonomy" id="192952"/>
    <lineage>
        <taxon>Archaea</taxon>
        <taxon>Methanobacteriati</taxon>
        <taxon>Methanobacteriota</taxon>
        <taxon>Stenosarchaea group</taxon>
        <taxon>Methanomicrobia</taxon>
        <taxon>Methanosarcinales</taxon>
        <taxon>Methanosarcinaceae</taxon>
        <taxon>Methanosarcina</taxon>
    </lineage>
</organism>
<feature type="chain" id="PRO_0000127052" description="Large ribosomal subunit protein eL39">
    <location>
        <begin position="1"/>
        <end position="51"/>
    </location>
</feature>
<feature type="region of interest" description="Disordered" evidence="2">
    <location>
        <begin position="1"/>
        <end position="23"/>
    </location>
</feature>
<feature type="compositionally biased region" description="Basic residues" evidence="2">
    <location>
        <begin position="1"/>
        <end position="19"/>
    </location>
</feature>
<sequence>MSHNMKGQKKRLAKAHKQNSRVPVWAIVKTNRKVVSHPRRRHWRRGSLDVK</sequence>
<accession>Q8PYQ5</accession>
<comment type="similarity">
    <text evidence="1">Belongs to the eukaryotic ribosomal protein eL39 family.</text>
</comment>
<comment type="sequence caution" evidence="3">
    <conflict type="erroneous initiation">
        <sequence resource="EMBL-CDS" id="AAM30501"/>
    </conflict>
</comment>
<proteinExistence type="inferred from homology"/>
<protein>
    <recommendedName>
        <fullName evidence="1">Large ribosomal subunit protein eL39</fullName>
    </recommendedName>
    <alternativeName>
        <fullName evidence="3">50S ribosomal protein L39e</fullName>
    </alternativeName>
</protein>
<dbReference type="EMBL" id="AE008384">
    <property type="protein sequence ID" value="AAM30501.1"/>
    <property type="status" value="ALT_INIT"/>
    <property type="molecule type" value="Genomic_DNA"/>
</dbReference>
<dbReference type="RefSeq" id="WP_011032755.1">
    <property type="nucleotide sequence ID" value="NC_003901.1"/>
</dbReference>
<dbReference type="SMR" id="Q8PYQ5"/>
<dbReference type="KEGG" id="mma:MM_0805"/>
<dbReference type="PATRIC" id="fig|192952.21.peg.954"/>
<dbReference type="eggNOG" id="arCOG04177">
    <property type="taxonomic scope" value="Archaea"/>
</dbReference>
<dbReference type="HOGENOM" id="CLU_181948_4_0_2"/>
<dbReference type="Proteomes" id="UP000000595">
    <property type="component" value="Chromosome"/>
</dbReference>
<dbReference type="GO" id="GO:1990904">
    <property type="term" value="C:ribonucleoprotein complex"/>
    <property type="evidence" value="ECO:0007669"/>
    <property type="project" value="UniProtKB-KW"/>
</dbReference>
<dbReference type="GO" id="GO:0005840">
    <property type="term" value="C:ribosome"/>
    <property type="evidence" value="ECO:0007669"/>
    <property type="project" value="UniProtKB-KW"/>
</dbReference>
<dbReference type="GO" id="GO:0003735">
    <property type="term" value="F:structural constituent of ribosome"/>
    <property type="evidence" value="ECO:0007669"/>
    <property type="project" value="InterPro"/>
</dbReference>
<dbReference type="GO" id="GO:0006412">
    <property type="term" value="P:translation"/>
    <property type="evidence" value="ECO:0007669"/>
    <property type="project" value="UniProtKB-UniRule"/>
</dbReference>
<dbReference type="FunFam" id="1.10.1620.10:FF:000001">
    <property type="entry name" value="60S ribosomal protein-like L39"/>
    <property type="match status" value="1"/>
</dbReference>
<dbReference type="Gene3D" id="1.10.1620.10">
    <property type="entry name" value="Ribosomal protein L39e"/>
    <property type="match status" value="1"/>
</dbReference>
<dbReference type="HAMAP" id="MF_00629">
    <property type="entry name" value="Ribosomal_eL39"/>
    <property type="match status" value="1"/>
</dbReference>
<dbReference type="InterPro" id="IPR000077">
    <property type="entry name" value="Ribosomal_eL39"/>
</dbReference>
<dbReference type="InterPro" id="IPR020083">
    <property type="entry name" value="Ribosomal_eL39_CS"/>
</dbReference>
<dbReference type="InterPro" id="IPR023626">
    <property type="entry name" value="Ribosomal_eL39_dom_sf"/>
</dbReference>
<dbReference type="NCBIfam" id="NF002316">
    <property type="entry name" value="PRK01242.1"/>
    <property type="match status" value="1"/>
</dbReference>
<dbReference type="Pfam" id="PF00832">
    <property type="entry name" value="Ribosomal_L39"/>
    <property type="match status" value="1"/>
</dbReference>
<dbReference type="SUPFAM" id="SSF48662">
    <property type="entry name" value="Ribosomal protein L39e"/>
    <property type="match status" value="1"/>
</dbReference>
<dbReference type="PROSITE" id="PS00051">
    <property type="entry name" value="RIBOSOMAL_L39E"/>
    <property type="match status" value="1"/>
</dbReference>
<evidence type="ECO:0000255" key="1">
    <source>
        <dbReference type="HAMAP-Rule" id="MF_00629"/>
    </source>
</evidence>
<evidence type="ECO:0000256" key="2">
    <source>
        <dbReference type="SAM" id="MobiDB-lite"/>
    </source>
</evidence>
<evidence type="ECO:0000305" key="3"/>
<keyword id="KW-0687">Ribonucleoprotein</keyword>
<keyword id="KW-0689">Ribosomal protein</keyword>
<gene>
    <name evidence="1" type="primary">rpl39e</name>
    <name type="ordered locus">MM_0805</name>
</gene>
<reference key="1">
    <citation type="journal article" date="2002" name="J. Mol. Microbiol. Biotechnol.">
        <title>The genome of Methanosarcina mazei: evidence for lateral gene transfer between Bacteria and Archaea.</title>
        <authorList>
            <person name="Deppenmeier U."/>
            <person name="Johann A."/>
            <person name="Hartsch T."/>
            <person name="Merkl R."/>
            <person name="Schmitz R.A."/>
            <person name="Martinez-Arias R."/>
            <person name="Henne A."/>
            <person name="Wiezer A."/>
            <person name="Baeumer S."/>
            <person name="Jacobi C."/>
            <person name="Brueggemann H."/>
            <person name="Lienard T."/>
            <person name="Christmann A."/>
            <person name="Boemecke M."/>
            <person name="Steckel S."/>
            <person name="Bhattacharyya A."/>
            <person name="Lykidis A."/>
            <person name="Overbeek R."/>
            <person name="Klenk H.-P."/>
            <person name="Gunsalus R.P."/>
            <person name="Fritz H.-J."/>
            <person name="Gottschalk G."/>
        </authorList>
    </citation>
    <scope>NUCLEOTIDE SEQUENCE [LARGE SCALE GENOMIC DNA]</scope>
    <source>
        <strain>ATCC BAA-159 / DSM 3647 / Goe1 / Go1 / JCM 11833 / OCM 88</strain>
    </source>
</reference>
<name>RL39_METMA</name>